<gene>
    <name type="primary">DDR48</name>
    <name type="synonym">FSP</name>
    <name type="ordered locus">YMR173W</name>
    <name type="ORF">YM8010.03</name>
</gene>
<feature type="initiator methionine" description="Removed" evidence="3 6">
    <location>
        <position position="1"/>
    </location>
</feature>
<feature type="chain" id="PRO_0000079849" description="Stress protein DDR48">
    <location>
        <begin position="2"/>
        <end position="430"/>
    </location>
</feature>
<feature type="repeat" description="1">
    <location>
        <begin position="74"/>
        <end position="81"/>
    </location>
</feature>
<feature type="repeat" description="2">
    <location>
        <begin position="82"/>
        <end position="89"/>
    </location>
</feature>
<feature type="repeat" description="3">
    <location>
        <begin position="90"/>
        <end position="97"/>
    </location>
</feature>
<feature type="repeat" description="4">
    <location>
        <begin position="98"/>
        <end position="105"/>
    </location>
</feature>
<feature type="repeat" description="5">
    <location>
        <begin position="106"/>
        <end position="113"/>
    </location>
</feature>
<feature type="repeat" description="6">
    <location>
        <begin position="114"/>
        <end position="121"/>
    </location>
</feature>
<feature type="repeat" description="7; approximate">
    <location>
        <begin position="124"/>
        <end position="131"/>
    </location>
</feature>
<feature type="repeat" description="8">
    <location>
        <begin position="132"/>
        <end position="139"/>
    </location>
</feature>
<feature type="repeat" description="9">
    <location>
        <begin position="141"/>
        <end position="148"/>
    </location>
</feature>
<feature type="repeat" description="10">
    <location>
        <begin position="149"/>
        <end position="156"/>
    </location>
</feature>
<feature type="repeat" description="11">
    <location>
        <begin position="157"/>
        <end position="164"/>
    </location>
</feature>
<feature type="repeat" description="12">
    <location>
        <begin position="165"/>
        <end position="172"/>
    </location>
</feature>
<feature type="repeat" description="13; approximate">
    <location>
        <begin position="175"/>
        <end position="182"/>
    </location>
</feature>
<feature type="repeat" description="14">
    <location>
        <begin position="183"/>
        <end position="190"/>
    </location>
</feature>
<feature type="repeat" description="15">
    <location>
        <begin position="191"/>
        <end position="198"/>
    </location>
</feature>
<feature type="repeat" description="16; approximate">
    <location>
        <begin position="201"/>
        <end position="208"/>
    </location>
</feature>
<feature type="repeat" description="17">
    <location>
        <begin position="209"/>
        <end position="216"/>
    </location>
</feature>
<feature type="repeat" description="18">
    <location>
        <begin position="217"/>
        <end position="224"/>
    </location>
</feature>
<feature type="repeat" description="19">
    <location>
        <begin position="225"/>
        <end position="232"/>
    </location>
</feature>
<feature type="repeat" description="20">
    <location>
        <begin position="233"/>
        <end position="240"/>
    </location>
</feature>
<feature type="repeat" description="21; approximate">
    <location>
        <begin position="243"/>
        <end position="250"/>
    </location>
</feature>
<feature type="repeat" description="22">
    <location>
        <begin position="251"/>
        <end position="258"/>
    </location>
</feature>
<feature type="repeat" description="23">
    <location>
        <begin position="260"/>
        <end position="267"/>
    </location>
</feature>
<feature type="repeat" description="24">
    <location>
        <begin position="268"/>
        <end position="275"/>
    </location>
</feature>
<feature type="repeat" description="25; approximate">
    <location>
        <begin position="278"/>
        <end position="285"/>
    </location>
</feature>
<feature type="repeat" description="26">
    <location>
        <begin position="287"/>
        <end position="294"/>
    </location>
</feature>
<feature type="repeat" description="27">
    <location>
        <begin position="296"/>
        <end position="303"/>
    </location>
</feature>
<feature type="repeat" description="28; approximate">
    <location>
        <begin position="306"/>
        <end position="313"/>
    </location>
</feature>
<feature type="repeat" description="29">
    <location>
        <begin position="314"/>
        <end position="321"/>
    </location>
</feature>
<feature type="repeat" description="30">
    <location>
        <begin position="322"/>
        <end position="329"/>
    </location>
</feature>
<feature type="repeat" description="31; approximate">
    <location>
        <begin position="332"/>
        <end position="339"/>
    </location>
</feature>
<feature type="repeat" description="32">
    <location>
        <begin position="340"/>
        <end position="347"/>
    </location>
</feature>
<feature type="repeat" description="33">
    <location>
        <begin position="348"/>
        <end position="355"/>
    </location>
</feature>
<feature type="repeat" description="34; approximate">
    <location>
        <begin position="358"/>
        <end position="365"/>
    </location>
</feature>
<feature type="repeat" description="35">
    <location>
        <begin position="366"/>
        <end position="373"/>
    </location>
</feature>
<feature type="repeat" description="36">
    <location>
        <begin position="375"/>
        <end position="382"/>
    </location>
</feature>
<feature type="repeat" description="37; approximate">
    <location>
        <begin position="393"/>
        <end position="400"/>
    </location>
</feature>
<feature type="repeat" description="38">
    <location>
        <begin position="407"/>
        <end position="414"/>
    </location>
</feature>
<feature type="region of interest" description="Disordered" evidence="1">
    <location>
        <begin position="1"/>
        <end position="430"/>
    </location>
</feature>
<feature type="region of interest" description="38 X 8 AA approximate tandem repeats of S-[NS]-N-[ND]-D-S-Y-G">
    <location>
        <begin position="74"/>
        <end position="414"/>
    </location>
</feature>
<feature type="compositionally biased region" description="Low complexity" evidence="1">
    <location>
        <begin position="12"/>
        <end position="27"/>
    </location>
</feature>
<feature type="compositionally biased region" description="Basic and acidic residues" evidence="1">
    <location>
        <begin position="37"/>
        <end position="60"/>
    </location>
</feature>
<feature type="compositionally biased region" description="Low complexity" evidence="1">
    <location>
        <begin position="70"/>
        <end position="421"/>
    </location>
</feature>
<feature type="modified residue" description="Phosphoserine" evidence="9">
    <location>
        <position position="183"/>
    </location>
</feature>
<feature type="modified residue" description="Phosphoserine" evidence="9">
    <location>
        <position position="191"/>
    </location>
</feature>
<feature type="modified residue" description="Phosphoserine" evidence="9">
    <location>
        <position position="314"/>
    </location>
</feature>
<feature type="modified residue" description="Phosphoserine" evidence="9">
    <location>
        <position position="322"/>
    </location>
</feature>
<feature type="sequence conflict" description="In Ref. 6; AA sequence." evidence="7" ref="6">
    <original>Q</original>
    <variation>E</variation>
    <location>
        <position position="9"/>
    </location>
</feature>
<feature type="sequence conflict" description="In Ref. 1; AAA34563." evidence="7" ref="1">
    <original>E</original>
    <variation>Q</variation>
    <location>
        <position position="38"/>
    </location>
</feature>
<name>DDR48_YEAST</name>
<dbReference type="EMBL" id="M36110">
    <property type="protein sequence ID" value="AAA34563.1"/>
    <property type="molecule type" value="Genomic_DNA"/>
</dbReference>
<dbReference type="EMBL" id="S73336">
    <property type="protein sequence ID" value="AAB31954.1"/>
    <property type="molecule type" value="Genomic_DNA"/>
</dbReference>
<dbReference type="EMBL" id="Z49808">
    <property type="protein sequence ID" value="CAA89906.1"/>
    <property type="molecule type" value="Genomic_DNA"/>
</dbReference>
<dbReference type="EMBL" id="BK006946">
    <property type="protein sequence ID" value="DAA10069.1"/>
    <property type="molecule type" value="Genomic_DNA"/>
</dbReference>
<dbReference type="PIR" id="S55120">
    <property type="entry name" value="HHBYD8"/>
</dbReference>
<dbReference type="RefSeq" id="NP_013897.1">
    <property type="nucleotide sequence ID" value="NM_001182678.1"/>
</dbReference>
<dbReference type="BioGRID" id="35351">
    <property type="interactions" value="85"/>
</dbReference>
<dbReference type="DIP" id="DIP-4424N"/>
<dbReference type="FunCoup" id="P18899">
    <property type="interactions" value="112"/>
</dbReference>
<dbReference type="IntAct" id="P18899">
    <property type="interactions" value="8"/>
</dbReference>
<dbReference type="MINT" id="P18899"/>
<dbReference type="STRING" id="4932.YMR173W"/>
<dbReference type="iPTMnet" id="P18899"/>
<dbReference type="PaxDb" id="4932-YMR173W"/>
<dbReference type="PeptideAtlas" id="P18899"/>
<dbReference type="TopDownProteomics" id="P18899"/>
<dbReference type="EnsemblFungi" id="YMR173W_mRNA">
    <property type="protein sequence ID" value="YMR173W"/>
    <property type="gene ID" value="YMR173W"/>
</dbReference>
<dbReference type="GeneID" id="855210"/>
<dbReference type="KEGG" id="sce:YMR173W"/>
<dbReference type="AGR" id="SGD:S000004784"/>
<dbReference type="SGD" id="S000004784">
    <property type="gene designation" value="DDR48"/>
</dbReference>
<dbReference type="VEuPathDB" id="FungiDB:YMR173W"/>
<dbReference type="eggNOG" id="ENOG502QUR8">
    <property type="taxonomic scope" value="Eukaryota"/>
</dbReference>
<dbReference type="HOGENOM" id="CLU_040090_0_0_1"/>
<dbReference type="InParanoid" id="P18899"/>
<dbReference type="OMA" id="EETCYPC"/>
<dbReference type="OrthoDB" id="4070694at2759"/>
<dbReference type="BioCyc" id="YEAST:G3O-32861-MONOMER"/>
<dbReference type="BioGRID-ORCS" id="855210">
    <property type="hits" value="0 hits in 10 CRISPR screens"/>
</dbReference>
<dbReference type="PRO" id="PR:P18899"/>
<dbReference type="Proteomes" id="UP000002311">
    <property type="component" value="Chromosome XIII"/>
</dbReference>
<dbReference type="RNAct" id="P18899">
    <property type="molecule type" value="protein"/>
</dbReference>
<dbReference type="GO" id="GO:0005737">
    <property type="term" value="C:cytoplasm"/>
    <property type="evidence" value="ECO:0007005"/>
    <property type="project" value="SGD"/>
</dbReference>
<dbReference type="GO" id="GO:0005829">
    <property type="term" value="C:cytosol"/>
    <property type="evidence" value="ECO:0007005"/>
    <property type="project" value="SGD"/>
</dbReference>
<dbReference type="GO" id="GO:0016887">
    <property type="term" value="F:ATP hydrolysis activity"/>
    <property type="evidence" value="ECO:0000314"/>
    <property type="project" value="SGD"/>
</dbReference>
<dbReference type="GO" id="GO:0003924">
    <property type="term" value="F:GTPase activity"/>
    <property type="evidence" value="ECO:0000314"/>
    <property type="project" value="SGD"/>
</dbReference>
<dbReference type="GO" id="GO:0006281">
    <property type="term" value="P:DNA repair"/>
    <property type="evidence" value="ECO:0000314"/>
    <property type="project" value="SGD"/>
</dbReference>
<proteinExistence type="evidence at protein level"/>
<protein>
    <recommendedName>
        <fullName>Stress protein DDR48</fullName>
    </recommendedName>
    <alternativeName>
        <fullName>DNA damage-responsive protein 48</fullName>
        <shortName>DDRP 48</shortName>
    </alternativeName>
    <alternativeName>
        <fullName>Flocculent-specific protein</fullName>
    </alternativeName>
    <alternativeName>
        <fullName>YP 75</fullName>
    </alternativeName>
</protein>
<evidence type="ECO:0000256" key="1">
    <source>
        <dbReference type="SAM" id="MobiDB-lite"/>
    </source>
</evidence>
<evidence type="ECO:0000269" key="2">
    <source>
    </source>
</evidence>
<evidence type="ECO:0000269" key="3">
    <source>
    </source>
</evidence>
<evidence type="ECO:0000269" key="4">
    <source>
    </source>
</evidence>
<evidence type="ECO:0000269" key="5">
    <source>
    </source>
</evidence>
<evidence type="ECO:0000269" key="6">
    <source>
    </source>
</evidence>
<evidence type="ECO:0000305" key="7"/>
<evidence type="ECO:0000305" key="8">
    <source>
    </source>
</evidence>
<evidence type="ECO:0007744" key="9">
    <source>
    </source>
</evidence>
<organism>
    <name type="scientific">Saccharomyces cerevisiae (strain ATCC 204508 / S288c)</name>
    <name type="common">Baker's yeast</name>
    <dbReference type="NCBI Taxonomy" id="559292"/>
    <lineage>
        <taxon>Eukaryota</taxon>
        <taxon>Fungi</taxon>
        <taxon>Dikarya</taxon>
        <taxon>Ascomycota</taxon>
        <taxon>Saccharomycotina</taxon>
        <taxon>Saccharomycetes</taxon>
        <taxon>Saccharomycetales</taxon>
        <taxon>Saccharomycetaceae</taxon>
        <taxon>Saccharomyces</taxon>
    </lineage>
</organism>
<sequence>MGLFDKVKQFANSNNNNNDSGNNNQGDYVTKAENMIGEDRVNQFKSKIGEDRFDKMESKVRQQFSNTSINDNDSNNNDSYGSNNNDSYGSNNNDSYGSNNNDSYGSNNNDSYGSNNDDSYGSSNKKKSSYGSNNDDSYGSSNNNDSYGSNNNDSYGSNNNDSYGSNNDDSYGSSNKNKSSYGSNNDDSYGSNNDDSYGSSNKKKSSYGSSNNDSYGSNNDDSYGSNNNDSYGSNNDDSYGSSNKKKSSYGSNNDDSYGSSNNNDSYGSNNDDSYGSSNKNKSSYGSSSNDDSYGSSNNDDSYGSSNKKKSSYGSNNDDSYGSNNDDSYGSSNKKKSSYGSSNNDSYGSNNDDSYGSSNKKKSSYGSNNDDSYGSSNNNDSYGSNNDDSYGSSNRNKNSYGSSNYGSSNNDDSYGSSNRGGRNQYGGDDDY</sequence>
<keyword id="KW-0903">Direct protein sequencing</keyword>
<keyword id="KW-0325">Glycoprotein</keyword>
<keyword id="KW-0597">Phosphoprotein</keyword>
<keyword id="KW-1185">Reference proteome</keyword>
<keyword id="KW-0677">Repeat</keyword>
<keyword id="KW-0346">Stress response</keyword>
<reference key="1">
    <citation type="journal article" date="1990" name="Mol. Cell. Biol.">
        <title>Structure of the DNA damage-inducible gene DDR48 and evidence for its role in mutagenesis in Saccharomyces cerevisiae.</title>
        <authorList>
            <person name="Treger J.M."/>
            <person name="McEntee K."/>
        </authorList>
    </citation>
    <scope>NUCLEOTIDE SEQUENCE [GENOMIC DNA]</scope>
    <scope>FUNCTION</scope>
    <scope>DISRUPTION PHENOTYPE</scope>
</reference>
<reference key="2">
    <citation type="journal article" date="1994" name="J. Biochem.">
        <title>Molecular cloning of the gene encoding a highly expressed protein in SFL1 gene-disrupted flocculating yeast.</title>
        <authorList>
            <person name="Tonouchi A."/>
            <person name="Fujita A."/>
            <person name="Kuhara S."/>
        </authorList>
    </citation>
    <scope>NUCLEOTIDE SEQUENCE [GENOMIC DNA]</scope>
</reference>
<reference key="3">
    <citation type="journal article" date="1997" name="Nature">
        <title>The nucleotide sequence of Saccharomyces cerevisiae chromosome XIII.</title>
        <authorList>
            <person name="Bowman S."/>
            <person name="Churcher C.M."/>
            <person name="Badcock K."/>
            <person name="Brown D."/>
            <person name="Chillingworth T."/>
            <person name="Connor R."/>
            <person name="Dedman K."/>
            <person name="Devlin K."/>
            <person name="Gentles S."/>
            <person name="Hamlin N."/>
            <person name="Hunt S."/>
            <person name="Jagels K."/>
            <person name="Lye G."/>
            <person name="Moule S."/>
            <person name="Odell C."/>
            <person name="Pearson D."/>
            <person name="Rajandream M.A."/>
            <person name="Rice P."/>
            <person name="Skelton J."/>
            <person name="Walsh S.V."/>
            <person name="Whitehead S."/>
            <person name="Barrell B.G."/>
        </authorList>
    </citation>
    <scope>NUCLEOTIDE SEQUENCE [LARGE SCALE GENOMIC DNA]</scope>
    <source>
        <strain>ATCC 204508 / S288c</strain>
    </source>
</reference>
<reference key="4">
    <citation type="journal article" date="2014" name="G3 (Bethesda)">
        <title>The reference genome sequence of Saccharomyces cerevisiae: Then and now.</title>
        <authorList>
            <person name="Engel S.R."/>
            <person name="Dietrich F.S."/>
            <person name="Fisk D.G."/>
            <person name="Binkley G."/>
            <person name="Balakrishnan R."/>
            <person name="Costanzo M.C."/>
            <person name="Dwight S.S."/>
            <person name="Hitz B.C."/>
            <person name="Karra K."/>
            <person name="Nash R.S."/>
            <person name="Weng S."/>
            <person name="Wong E.D."/>
            <person name="Lloyd P."/>
            <person name="Skrzypek M.S."/>
            <person name="Miyasato S.R."/>
            <person name="Simison M."/>
            <person name="Cherry J.M."/>
        </authorList>
    </citation>
    <scope>GENOME REANNOTATION</scope>
    <source>
        <strain>ATCC 204508 / S288c</strain>
    </source>
</reference>
<reference key="5">
    <citation type="journal article" date="1993" name="J. Biol. Chem.">
        <title>Purification and characterization of Saccharomyces cerevisiae DNA damage-responsive protein 48 (DDRP 48).</title>
        <authorList>
            <person name="Sheng S."/>
            <person name="Schuster S.M."/>
        </authorList>
    </citation>
    <scope>PROTEIN SEQUENCE OF 2-31</scope>
    <scope>CLEAVAGE OF INITIATOR METHIONINE</scope>
    <scope>BIOPHYSICOCHEMICAL PROPERTIES</scope>
    <scope>GLYCOSYLATION</scope>
    <scope>INDUCTION</scope>
</reference>
<reference key="6">
    <citation type="journal article" date="1990" name="Biochem. J.">
        <title>Purification, characterization and partial amino acid sequence of glycogen synthase from Saccharomyces cerevisiae.</title>
        <authorList>
            <person name="Carabaza A."/>
            <person name="Arino J."/>
            <person name="Fox J.W."/>
            <person name="Villar-Palasi C."/>
            <person name="Guinovart J.J."/>
        </authorList>
    </citation>
    <scope>PROTEIN SEQUENCE OF 2-12</scope>
</reference>
<reference key="7">
    <citation type="journal article" date="1986" name="Mol. Cell. Biol.">
        <title>DNA damage and heat shock dually regulate genes in Saccharomyces cerevisiae.</title>
        <authorList>
            <person name="McClanahan T."/>
            <person name="McEntee K."/>
        </authorList>
    </citation>
    <scope>INDUCTION</scope>
</reference>
<reference key="8">
    <citation type="journal article" date="2008" name="Mol. Cell. Proteomics">
        <title>A multidimensional chromatography technology for in-depth phosphoproteome analysis.</title>
        <authorList>
            <person name="Albuquerque C.P."/>
            <person name="Smolka M.B."/>
            <person name="Payne S.H."/>
            <person name="Bafna V."/>
            <person name="Eng J."/>
            <person name="Zhou H."/>
        </authorList>
    </citation>
    <scope>IDENTIFICATION BY MASS SPECTROMETRY [LARGE SCALE ANALYSIS]</scope>
</reference>
<reference key="9">
    <citation type="journal article" date="2009" name="Science">
        <title>Global analysis of Cdk1 substrate phosphorylation sites provides insights into evolution.</title>
        <authorList>
            <person name="Holt L.J."/>
            <person name="Tuch B.B."/>
            <person name="Villen J."/>
            <person name="Johnson A.D."/>
            <person name="Gygi S.P."/>
            <person name="Morgan D.O."/>
        </authorList>
    </citation>
    <scope>PHOSPHORYLATION [LARGE SCALE ANALYSIS] AT SER-183; SER-191; SER-314 AND SER-322</scope>
    <scope>IDENTIFICATION BY MASS SPECTROMETRY [LARGE SCALE ANALYSIS]</scope>
</reference>
<reference key="10">
    <citation type="journal article" date="2013" name="Mol. Biol. Evol.">
        <title>Yeast adapts to a changing stressful environment by evolving cross-protection and anticipatory gene regulation.</title>
        <authorList>
            <person name="Dhar R."/>
            <person name="Sagesser R."/>
            <person name="Weikert C."/>
            <person name="Wagner A."/>
        </authorList>
    </citation>
    <scope>INDUCTION</scope>
</reference>
<accession>P18899</accession>
<accession>D6VZZ5</accession>
<comment type="function">
    <text evidence="2">DNA damage-responsive protein that may be required for maintaining the rate of spontaneous mutagenesis. Shows low ATP and GTP hydrolysis activity. Dispensable for acquisition of thermotolerance and does not play a significant role in recovery or protection of cells from acute heat shock.</text>
</comment>
<comment type="biophysicochemical properties">
    <kinetics>
        <KM evidence="6">0.29 mM for ATP</KM>
        <KM evidence="6">0.58 mM for GTP</KM>
    </kinetics>
</comment>
<comment type="induction">
    <text evidence="4 5 6">Expression is induced by DNA damage, as well as by salt, oxidative, and heat-shock stress.</text>
</comment>
<comment type="PTM">
    <text evidence="6">Probably highly glycosylated.</text>
</comment>
<comment type="disruption phenotype">
    <text evidence="2">Shows a slightly altered sensitivity to killing by 4-nitroquinoline-1-oxide and to heat shock; and a 6- to 14-fold reduction of the spontaneous mutation rate of reversion of a HIS4 mutation.</text>
</comment>
<comment type="similarity">
    <text evidence="7">Belongs to the DDR48 family.</text>
</comment>
<comment type="caution">
    <text evidence="8">sequence is a contaminating peptide from a S.cerevisiae glycogen synthase purification.</text>
</comment>